<sequence length="688" mass="74416">MFKKLFGQLQRIGKALMLPVAILPAAGILLAFGNAMHNEQLVEIAPWLKNDIIVMISSVMEAAGQVVFDNLPLLFAVGTALGLAGGDGVAALAALVGYLIMNATMGKVLHITIDDIFSYAKGAKELSQAAKEPAHALVLGIPTLQTGVFGGIIMGALAAWCYNKFYNITLPPFLGFFAGKRFVPIVTSVVAIATGVLLSFAWPPIQDGLNSLSNFLLNKNLTLTTFIFGIIERSLIPFGLHHIFYSPFWFEFGSYTNHAGELVRGDQRIWMAQLKDGVPFTAGAFTTGKYPFMMFGLPAAAFAIYKNARPERKKVVGGLMLSAGLTAFLTGITEPLEFSFLFVAPVLYGIHVLLAGTSFLVMHLLGVKIGMTFSGGFIDYILYGLLNWDRSHALLVIPVGIVYAIVYYFLFDFAIRKFKLKTPGREDEETEIRNSSVAKLPFDVLDAMGGKENIKHLDACITRLRVEVVDKSKVDVAGIKALGASGVLEVGNNMQAIFGPKSDQIKHDMAKIMSGEITKPSETTVTEEMSDEPVHVEALGTTDIYAPGIGQIIPLSEVPDQVFAGKMMGDGVGFIPEKGEIVAPFDGTVKTIFPTKHAIGLESESGVEVLIHIGIDTVKLNGEGFESLINVDEKVTQGQPLMKVNLAYLKAHAPSIVTPMIITNLENKELVIEDVQDADPGKLIMTVK</sequence>
<protein>
    <recommendedName>
        <fullName>PTS system glucoside-specific EIICBA component</fullName>
    </recommendedName>
    <domain>
        <recommendedName>
            <fullName>Glucoside permease IIC component</fullName>
        </recommendedName>
        <alternativeName>
            <fullName>PTS system glucoside-specific EIIC component</fullName>
        </alternativeName>
    </domain>
    <domain>
        <recommendedName>
            <fullName>Glucoside-specific phosphotransferase enzyme IIB component</fullName>
            <ecNumber>2.7.1.-</ecNumber>
        </recommendedName>
        <alternativeName>
            <fullName>PTS system glucoside-specific EIIB component</fullName>
        </alternativeName>
    </domain>
    <domain>
        <recommendedName>
            <fullName>Glucoside-specific phosphotransferase enzyme IIA component</fullName>
        </recommendedName>
        <alternativeName>
            <fullName>PTS system glucoside-specific EIIA component</fullName>
        </alternativeName>
    </domain>
</protein>
<comment type="function">
    <text evidence="1">The phosphoenolpyruvate-dependent sugar phosphotransferase system (sugar PTS), a major carbohydrate active -transport system, catalyzes the phosphorylation of incoming sugar substrates concomitantly with their translocation across the cell membrane. This system is involved in alpha- and beta-glucoside transport (By similarity).</text>
</comment>
<comment type="subcellular location">
    <subcellularLocation>
        <location evidence="4">Cell membrane</location>
        <topology evidence="4">Multi-pass membrane protein</topology>
    </subcellularLocation>
</comment>
<comment type="domain">
    <text>The EIIC domain forms the PTS system translocation channel and contains the specific substrate-binding site.</text>
</comment>
<comment type="domain">
    <text>The EIIB domain is phosphorylated by phospho-EIIA on a cysteinyl or histidyl residue, depending on the transported sugar. Then, it transfers the phosphoryl group to the sugar substrate concomitantly with the sugar uptake processed by the EIIC domain.</text>
</comment>
<comment type="domain">
    <text>The EIIA domain is phosphorylated by phospho-HPr on a histidyl residue. Then, it transfers the phosphoryl group to the EIIB domain.</text>
</comment>
<dbReference type="EC" id="2.7.1.-"/>
<dbReference type="EMBL" id="AP009351">
    <property type="protein sequence ID" value="BAF68709.1"/>
    <property type="molecule type" value="Genomic_DNA"/>
</dbReference>
<dbReference type="SMR" id="A6QK27"/>
<dbReference type="KEGG" id="sae:NWMN_2437"/>
<dbReference type="HOGENOM" id="CLU_012312_1_1_9"/>
<dbReference type="Proteomes" id="UP000006386">
    <property type="component" value="Chromosome"/>
</dbReference>
<dbReference type="GO" id="GO:0005886">
    <property type="term" value="C:plasma membrane"/>
    <property type="evidence" value="ECO:0007669"/>
    <property type="project" value="UniProtKB-SubCell"/>
</dbReference>
<dbReference type="GO" id="GO:0055056">
    <property type="term" value="F:D-glucose transmembrane transporter activity"/>
    <property type="evidence" value="ECO:0007669"/>
    <property type="project" value="InterPro"/>
</dbReference>
<dbReference type="GO" id="GO:0016301">
    <property type="term" value="F:kinase activity"/>
    <property type="evidence" value="ECO:0007669"/>
    <property type="project" value="UniProtKB-KW"/>
</dbReference>
<dbReference type="GO" id="GO:0008982">
    <property type="term" value="F:protein-N(PI)-phosphohistidine-sugar phosphotransferase activity"/>
    <property type="evidence" value="ECO:0007669"/>
    <property type="project" value="InterPro"/>
</dbReference>
<dbReference type="GO" id="GO:0090563">
    <property type="term" value="F:protein-phosphocysteine-sugar phosphotransferase activity"/>
    <property type="evidence" value="ECO:0007669"/>
    <property type="project" value="TreeGrafter"/>
</dbReference>
<dbReference type="GO" id="GO:1904659">
    <property type="term" value="P:D-glucose transmembrane transport"/>
    <property type="evidence" value="ECO:0007669"/>
    <property type="project" value="InterPro"/>
</dbReference>
<dbReference type="GO" id="GO:0009401">
    <property type="term" value="P:phosphoenolpyruvate-dependent sugar phosphotransferase system"/>
    <property type="evidence" value="ECO:0007669"/>
    <property type="project" value="UniProtKB-KW"/>
</dbReference>
<dbReference type="CDD" id="cd00212">
    <property type="entry name" value="PTS_IIB_glc"/>
    <property type="match status" value="1"/>
</dbReference>
<dbReference type="FunFam" id="2.70.70.10:FF:000001">
    <property type="entry name" value="PTS system glucose-specific IIA component"/>
    <property type="match status" value="1"/>
</dbReference>
<dbReference type="FunFam" id="3.30.1360.60:FF:000001">
    <property type="entry name" value="PTS system glucose-specific IIBC component PtsG"/>
    <property type="match status" value="1"/>
</dbReference>
<dbReference type="Gene3D" id="2.70.70.10">
    <property type="entry name" value="Glucose Permease (Domain IIA)"/>
    <property type="match status" value="1"/>
</dbReference>
<dbReference type="Gene3D" id="3.30.1360.60">
    <property type="entry name" value="Glucose permease domain IIB"/>
    <property type="match status" value="1"/>
</dbReference>
<dbReference type="InterPro" id="IPR011055">
    <property type="entry name" value="Dup_hybrid_motif"/>
</dbReference>
<dbReference type="InterPro" id="IPR036878">
    <property type="entry name" value="Glu_permease_IIB"/>
</dbReference>
<dbReference type="InterPro" id="IPR018113">
    <property type="entry name" value="PTrfase_EIIB_Cys"/>
</dbReference>
<dbReference type="InterPro" id="IPR001127">
    <property type="entry name" value="PTS_EIIA_1_perm"/>
</dbReference>
<dbReference type="InterPro" id="IPR003352">
    <property type="entry name" value="PTS_EIIC"/>
</dbReference>
<dbReference type="InterPro" id="IPR013013">
    <property type="entry name" value="PTS_EIIC_1"/>
</dbReference>
<dbReference type="InterPro" id="IPR050429">
    <property type="entry name" value="PTS_Glucose_EIICBA"/>
</dbReference>
<dbReference type="InterPro" id="IPR001996">
    <property type="entry name" value="PTS_IIB_1"/>
</dbReference>
<dbReference type="InterPro" id="IPR011299">
    <property type="entry name" value="PTS_IIBC_glc"/>
</dbReference>
<dbReference type="NCBIfam" id="TIGR00826">
    <property type="entry name" value="EIIB_glc"/>
    <property type="match status" value="1"/>
</dbReference>
<dbReference type="NCBIfam" id="TIGR00830">
    <property type="entry name" value="PTBA"/>
    <property type="match status" value="1"/>
</dbReference>
<dbReference type="NCBIfam" id="TIGR02002">
    <property type="entry name" value="PTS-II-BC-glcB"/>
    <property type="match status" value="1"/>
</dbReference>
<dbReference type="PANTHER" id="PTHR30009">
    <property type="entry name" value="CYTOCHROME C-TYPE SYNTHESIS PROTEIN AND PTS TRANSMEMBRANE COMPONENT"/>
    <property type="match status" value="1"/>
</dbReference>
<dbReference type="PANTHER" id="PTHR30009:SF20">
    <property type="entry name" value="PTS SYSTEM GLUCOSE-SPECIFIC EIICB COMPONENT-RELATED"/>
    <property type="match status" value="1"/>
</dbReference>
<dbReference type="Pfam" id="PF00358">
    <property type="entry name" value="PTS_EIIA_1"/>
    <property type="match status" value="1"/>
</dbReference>
<dbReference type="Pfam" id="PF00367">
    <property type="entry name" value="PTS_EIIB"/>
    <property type="match status" value="1"/>
</dbReference>
<dbReference type="Pfam" id="PF02378">
    <property type="entry name" value="PTS_EIIC"/>
    <property type="match status" value="1"/>
</dbReference>
<dbReference type="SUPFAM" id="SSF51261">
    <property type="entry name" value="Duplicated hybrid motif"/>
    <property type="match status" value="1"/>
</dbReference>
<dbReference type="SUPFAM" id="SSF55604">
    <property type="entry name" value="Glucose permease domain IIB"/>
    <property type="match status" value="1"/>
</dbReference>
<dbReference type="PROSITE" id="PS51093">
    <property type="entry name" value="PTS_EIIA_TYPE_1"/>
    <property type="match status" value="1"/>
</dbReference>
<dbReference type="PROSITE" id="PS00371">
    <property type="entry name" value="PTS_EIIA_TYPE_1_HIS"/>
    <property type="match status" value="1"/>
</dbReference>
<dbReference type="PROSITE" id="PS51098">
    <property type="entry name" value="PTS_EIIB_TYPE_1"/>
    <property type="match status" value="1"/>
</dbReference>
<dbReference type="PROSITE" id="PS01035">
    <property type="entry name" value="PTS_EIIB_TYPE_1_CYS"/>
    <property type="match status" value="1"/>
</dbReference>
<dbReference type="PROSITE" id="PS51103">
    <property type="entry name" value="PTS_EIIC_TYPE_1"/>
    <property type="match status" value="1"/>
</dbReference>
<accession>A6QK27</accession>
<organism>
    <name type="scientific">Staphylococcus aureus (strain Newman)</name>
    <dbReference type="NCBI Taxonomy" id="426430"/>
    <lineage>
        <taxon>Bacteria</taxon>
        <taxon>Bacillati</taxon>
        <taxon>Bacillota</taxon>
        <taxon>Bacilli</taxon>
        <taxon>Bacillales</taxon>
        <taxon>Staphylococcaceae</taxon>
        <taxon>Staphylococcus</taxon>
    </lineage>
</organism>
<proteinExistence type="inferred from homology"/>
<gene>
    <name type="primary">glcB</name>
    <name type="ordered locus">NWMN_2437</name>
</gene>
<feature type="chain" id="PRO_0000351412" description="PTS system glucoside-specific EIICBA component">
    <location>
        <begin position="1"/>
        <end position="688"/>
    </location>
</feature>
<feature type="transmembrane region" description="Helical" evidence="4">
    <location>
        <begin position="12"/>
        <end position="32"/>
    </location>
</feature>
<feature type="transmembrane region" description="Helical" evidence="4">
    <location>
        <begin position="81"/>
        <end position="101"/>
    </location>
</feature>
<feature type="transmembrane region" description="Helical" evidence="4">
    <location>
        <begin position="137"/>
        <end position="157"/>
    </location>
</feature>
<feature type="transmembrane region" description="Helical" evidence="4">
    <location>
        <begin position="182"/>
        <end position="202"/>
    </location>
</feature>
<feature type="transmembrane region" description="Helical" evidence="4">
    <location>
        <begin position="223"/>
        <end position="243"/>
    </location>
</feature>
<feature type="transmembrane region" description="Helical" evidence="4">
    <location>
        <begin position="284"/>
        <end position="304"/>
    </location>
</feature>
<feature type="transmembrane region" description="Helical" evidence="4">
    <location>
        <begin position="315"/>
        <end position="335"/>
    </location>
</feature>
<feature type="transmembrane region" description="Helical" evidence="4">
    <location>
        <begin position="340"/>
        <end position="360"/>
    </location>
</feature>
<feature type="transmembrane region" description="Helical" evidence="4">
    <location>
        <begin position="364"/>
        <end position="384"/>
    </location>
</feature>
<feature type="transmembrane region" description="Helical" evidence="4">
    <location>
        <begin position="395"/>
        <end position="415"/>
    </location>
</feature>
<feature type="domain" description="PTS EIIC type-1" evidence="4">
    <location>
        <begin position="3"/>
        <end position="427"/>
    </location>
</feature>
<feature type="domain" description="PTS EIIB type-1" evidence="3">
    <location>
        <begin position="438"/>
        <end position="519"/>
    </location>
</feature>
<feature type="domain" description="PTS EIIA type-1" evidence="2">
    <location>
        <begin position="560"/>
        <end position="664"/>
    </location>
</feature>
<feature type="active site" description="Phosphocysteine intermediate; for EIIB activity" evidence="3">
    <location>
        <position position="460"/>
    </location>
</feature>
<feature type="active site" description="Tele-phosphohistidine intermediate; for EIIA activity" evidence="2">
    <location>
        <position position="612"/>
    </location>
</feature>
<reference key="1">
    <citation type="journal article" date="2008" name="J. Bacteriol.">
        <title>Genome sequence of Staphylococcus aureus strain Newman and comparative analysis of staphylococcal genomes: polymorphism and evolution of two major pathogenicity islands.</title>
        <authorList>
            <person name="Baba T."/>
            <person name="Bae T."/>
            <person name="Schneewind O."/>
            <person name="Takeuchi F."/>
            <person name="Hiramatsu K."/>
        </authorList>
    </citation>
    <scope>NUCLEOTIDE SEQUENCE [LARGE SCALE GENOMIC DNA]</scope>
    <source>
        <strain>Newman</strain>
    </source>
</reference>
<keyword id="KW-1003">Cell membrane</keyword>
<keyword id="KW-0418">Kinase</keyword>
<keyword id="KW-0472">Membrane</keyword>
<keyword id="KW-0598">Phosphotransferase system</keyword>
<keyword id="KW-0762">Sugar transport</keyword>
<keyword id="KW-0808">Transferase</keyword>
<keyword id="KW-0812">Transmembrane</keyword>
<keyword id="KW-1133">Transmembrane helix</keyword>
<keyword id="KW-0813">Transport</keyword>
<evidence type="ECO:0000250" key="1"/>
<evidence type="ECO:0000255" key="2">
    <source>
        <dbReference type="PROSITE-ProRule" id="PRU00416"/>
    </source>
</evidence>
<evidence type="ECO:0000255" key="3">
    <source>
        <dbReference type="PROSITE-ProRule" id="PRU00421"/>
    </source>
</evidence>
<evidence type="ECO:0000255" key="4">
    <source>
        <dbReference type="PROSITE-ProRule" id="PRU00426"/>
    </source>
</evidence>
<name>PTU3C_STAAE</name>